<gene>
    <name type="ordered locus">YPA_3753</name>
</gene>
<feature type="chain" id="PRO_1000009280" description="UPF0102 protein YPA_3753">
    <location>
        <begin position="1"/>
        <end position="117"/>
    </location>
</feature>
<sequence length="117" mass="13077">MSQRDTGAHYENLARRHLERAGLVFQAANVAFRGGEIDLIMRDGDAWVFVEVRFRRNDLFGGAAASITPRKQQRLHLAAAVWLAQRGASFATTSCRFDVVAITGNQLEWLPNAFNTD</sequence>
<accession>Q1C1F7</accession>
<dbReference type="EMBL" id="CP000308">
    <property type="protein sequence ID" value="ABG15715.1"/>
    <property type="molecule type" value="Genomic_DNA"/>
</dbReference>
<dbReference type="RefSeq" id="WP_002210147.1">
    <property type="nucleotide sequence ID" value="NZ_CP009906.1"/>
</dbReference>
<dbReference type="SMR" id="Q1C1F7"/>
<dbReference type="KEGG" id="ypa:YPA_3753"/>
<dbReference type="Proteomes" id="UP000001971">
    <property type="component" value="Chromosome"/>
</dbReference>
<dbReference type="GO" id="GO:0003676">
    <property type="term" value="F:nucleic acid binding"/>
    <property type="evidence" value="ECO:0007669"/>
    <property type="project" value="InterPro"/>
</dbReference>
<dbReference type="CDD" id="cd20736">
    <property type="entry name" value="PoNe_Nuclease"/>
    <property type="match status" value="1"/>
</dbReference>
<dbReference type="Gene3D" id="3.40.1350.10">
    <property type="match status" value="1"/>
</dbReference>
<dbReference type="HAMAP" id="MF_00048">
    <property type="entry name" value="UPF0102"/>
    <property type="match status" value="1"/>
</dbReference>
<dbReference type="InterPro" id="IPR011335">
    <property type="entry name" value="Restrct_endonuc-II-like"/>
</dbReference>
<dbReference type="InterPro" id="IPR011856">
    <property type="entry name" value="tRNA_endonuc-like_dom_sf"/>
</dbReference>
<dbReference type="InterPro" id="IPR003509">
    <property type="entry name" value="UPF0102_YraN-like"/>
</dbReference>
<dbReference type="NCBIfam" id="NF009150">
    <property type="entry name" value="PRK12497.1-3"/>
    <property type="match status" value="1"/>
</dbReference>
<dbReference type="NCBIfam" id="TIGR00252">
    <property type="entry name" value="YraN family protein"/>
    <property type="match status" value="1"/>
</dbReference>
<dbReference type="PANTHER" id="PTHR34039">
    <property type="entry name" value="UPF0102 PROTEIN YRAN"/>
    <property type="match status" value="1"/>
</dbReference>
<dbReference type="PANTHER" id="PTHR34039:SF1">
    <property type="entry name" value="UPF0102 PROTEIN YRAN"/>
    <property type="match status" value="1"/>
</dbReference>
<dbReference type="Pfam" id="PF02021">
    <property type="entry name" value="UPF0102"/>
    <property type="match status" value="1"/>
</dbReference>
<dbReference type="SUPFAM" id="SSF52980">
    <property type="entry name" value="Restriction endonuclease-like"/>
    <property type="match status" value="1"/>
</dbReference>
<evidence type="ECO:0000255" key="1">
    <source>
        <dbReference type="HAMAP-Rule" id="MF_00048"/>
    </source>
</evidence>
<protein>
    <recommendedName>
        <fullName evidence="1">UPF0102 protein YPA_3753</fullName>
    </recommendedName>
</protein>
<reference key="1">
    <citation type="journal article" date="2006" name="J. Bacteriol.">
        <title>Complete genome sequence of Yersinia pestis strains Antiqua and Nepal516: evidence of gene reduction in an emerging pathogen.</title>
        <authorList>
            <person name="Chain P.S.G."/>
            <person name="Hu P."/>
            <person name="Malfatti S.A."/>
            <person name="Radnedge L."/>
            <person name="Larimer F."/>
            <person name="Vergez L.M."/>
            <person name="Worsham P."/>
            <person name="Chu M.C."/>
            <person name="Andersen G.L."/>
        </authorList>
    </citation>
    <scope>NUCLEOTIDE SEQUENCE [LARGE SCALE GENOMIC DNA]</scope>
    <source>
        <strain>Antiqua</strain>
    </source>
</reference>
<proteinExistence type="inferred from homology"/>
<organism>
    <name type="scientific">Yersinia pestis bv. Antiqua (strain Antiqua)</name>
    <dbReference type="NCBI Taxonomy" id="360102"/>
    <lineage>
        <taxon>Bacteria</taxon>
        <taxon>Pseudomonadati</taxon>
        <taxon>Pseudomonadota</taxon>
        <taxon>Gammaproteobacteria</taxon>
        <taxon>Enterobacterales</taxon>
        <taxon>Yersiniaceae</taxon>
        <taxon>Yersinia</taxon>
    </lineage>
</organism>
<name>Y3753_YERPA</name>
<comment type="similarity">
    <text evidence="1">Belongs to the UPF0102 family.</text>
</comment>